<comment type="function">
    <text evidence="4">Exhibits a significant hydrolytic activity for the carbonyl side of glutamic acid. Shows activity toward human fibronectin and type 1 collagen.</text>
</comment>
<comment type="catalytic activity">
    <reaction evidence="2">
        <text>Preferential cleavage: Glu-|-Xaa, Asp-|-Xaa.</text>
        <dbReference type="EC" id="3.4.21.19"/>
    </reaction>
</comment>
<comment type="activity regulation">
    <text evidence="4">Inhibited by diisopropyl fluorophosphate.</text>
</comment>
<comment type="biophysicochemical properties">
    <phDependence>
        <text>Optimum pH is 8.0. Active from pH 6.0 to 9.0.</text>
    </phDependence>
</comment>
<comment type="subunit">
    <text evidence="6">Monomer.</text>
</comment>
<comment type="subcellular location">
    <subcellularLocation>
        <location evidence="4">Secreted</location>
    </subcellularLocation>
</comment>
<comment type="similarity">
    <text evidence="5">Belongs to the peptidase S1B family.</text>
</comment>
<proteinExistence type="evidence at protein level"/>
<protein>
    <recommendedName>
        <fullName>Glutamyl endopeptidase</fullName>
        <ecNumber>3.4.21.19</ecNumber>
    </recommendedName>
    <alternativeName>
        <fullName>Glutamic acid-specific protease</fullName>
        <shortName>GluSE</shortName>
    </alternativeName>
</protein>
<sequence>MKKRFLSICTMTIAALATTTMVNTSYAKTDTESHNHSSLGTENKNVLDINSSSHNIKPSQNKSYPSVILPNNNRHQIFNTTQGHYDAVSFIYIPIDGGYMSGSGVVVGENEILTNKHVVNGAKGNPRNISVHPSAKNENDYPNGKFVGQEIIPYPGNSDLAILRVSPNEHNQHIGQVVKPATISSNTDTRINENITVTGYPGDKPLATMWESVGKVVYIGGEELRYDLSTVGGNSGSPVFNGKNQVIGIHYGGVDNKYNSSVYINDFVQQFLRNNIPDINIQ</sequence>
<reference key="1">
    <citation type="journal article" date="2002" name="Microb. Pathog.">
        <title>Characterization and molecular cloning of a glutamyl endopeptidase from Staphylococcus epidermidis.</title>
        <authorList>
            <person name="Ohara-Nemoto Y."/>
            <person name="Ikeda Y."/>
            <person name="Kobayashi M."/>
            <person name="Sasaki M."/>
            <person name="Tajika S."/>
            <person name="Kimura S."/>
        </authorList>
    </citation>
    <scope>NUCLEOTIDE SEQUENCE [GENOMIC DNA]</scope>
    <scope>PROTEIN SEQUENCE OF 67-85</scope>
    <scope>FUNCTION</scope>
    <scope>ACTIVITY REGULATION</scope>
    <scope>SUBUNIT</scope>
    <scope>SUBCELLULAR LOCATION</scope>
    <source>
        <strain>ATCC 14990 / DSM 20044 / CIP 81.55 / NCTC 11047</strain>
    </source>
</reference>
<reference key="2">
    <citation type="journal article" date="2001" name="Biol. Chem.">
        <title>Molecular cloning and biochemical characterisation of proteases from Staphylcoccus epidermidis.</title>
        <authorList>
            <person name="Dubin G."/>
            <person name="Chmiel D."/>
            <person name="Mak P."/>
            <person name="Rakwalska M."/>
            <person name="Rzychon M."/>
            <person name="Dubin A."/>
        </authorList>
    </citation>
    <scope>NUCLEOTIDE SEQUENCE [GENOMIC DNA] OF 66-282</scope>
    <scope>PROTEIN SEQUENCE OF 67-96</scope>
    <source>
        <strain>6746</strain>
    </source>
</reference>
<feature type="signal peptide" evidence="1">
    <location>
        <begin position="1"/>
        <end position="27"/>
    </location>
</feature>
<feature type="propeptide" id="PRO_0000026896" evidence="3 4">
    <location>
        <begin position="28"/>
        <end position="66"/>
    </location>
</feature>
<feature type="chain" id="PRO_0000026897" description="Glutamyl endopeptidase">
    <location>
        <begin position="67"/>
        <end position="282"/>
    </location>
</feature>
<feature type="active site" description="Charge relay system" evidence="2">
    <location>
        <position position="117"/>
    </location>
</feature>
<feature type="active site" description="Charge relay system" evidence="2">
    <location>
        <position position="159"/>
    </location>
</feature>
<feature type="active site" description="Charge relay system" evidence="2">
    <location>
        <position position="235"/>
    </location>
</feature>
<name>GSEA_STAEP</name>
<accession>P0C0Q1</accession>
<accession>Q7DG19</accession>
<accession>Q8CMC1</accession>
<accession>Q9AJX0</accession>
<keyword id="KW-0903">Direct protein sequencing</keyword>
<keyword id="KW-0378">Hydrolase</keyword>
<keyword id="KW-0645">Protease</keyword>
<keyword id="KW-0964">Secreted</keyword>
<keyword id="KW-0720">Serine protease</keyword>
<keyword id="KW-0732">Signal</keyword>
<keyword id="KW-0843">Virulence</keyword>
<keyword id="KW-0865">Zymogen</keyword>
<evidence type="ECO:0000255" key="1"/>
<evidence type="ECO:0000255" key="2">
    <source>
        <dbReference type="PROSITE-ProRule" id="PRU10083"/>
    </source>
</evidence>
<evidence type="ECO:0000269" key="3">
    <source>
    </source>
</evidence>
<evidence type="ECO:0000269" key="4">
    <source>
    </source>
</evidence>
<evidence type="ECO:0000305" key="5"/>
<evidence type="ECO:0000305" key="6">
    <source>
    </source>
</evidence>
<gene>
    <name type="primary">gseA</name>
    <name type="synonym">esp</name>
</gene>
<dbReference type="EC" id="3.4.21.19"/>
<dbReference type="EMBL" id="AB096695">
    <property type="protein sequence ID" value="BAC24763.1"/>
    <property type="molecule type" value="Genomic_DNA"/>
</dbReference>
<dbReference type="EMBL" id="AJ305145">
    <property type="protein sequence ID" value="CAC27157.1"/>
    <property type="molecule type" value="Genomic_DNA"/>
</dbReference>
<dbReference type="RefSeq" id="WP_001829860.1">
    <property type="nucleotide sequence ID" value="NZ_WLVA01000001.1"/>
</dbReference>
<dbReference type="SMR" id="P0C0Q1"/>
<dbReference type="MEROPS" id="S01.522"/>
<dbReference type="OrthoDB" id="191045at2"/>
<dbReference type="BRENDA" id="3.4.21.19">
    <property type="organism ID" value="5875"/>
</dbReference>
<dbReference type="GO" id="GO:0005576">
    <property type="term" value="C:extracellular region"/>
    <property type="evidence" value="ECO:0007669"/>
    <property type="project" value="UniProtKB-SubCell"/>
</dbReference>
<dbReference type="GO" id="GO:0004252">
    <property type="term" value="F:serine-type endopeptidase activity"/>
    <property type="evidence" value="ECO:0007669"/>
    <property type="project" value="InterPro"/>
</dbReference>
<dbReference type="GO" id="GO:0006508">
    <property type="term" value="P:proteolysis"/>
    <property type="evidence" value="ECO:0007669"/>
    <property type="project" value="UniProtKB-KW"/>
</dbReference>
<dbReference type="Gene3D" id="2.40.10.10">
    <property type="entry name" value="Trypsin-like serine proteases"/>
    <property type="match status" value="2"/>
</dbReference>
<dbReference type="InterPro" id="IPR050966">
    <property type="entry name" value="Glutamyl_endopeptidase"/>
</dbReference>
<dbReference type="InterPro" id="IPR009003">
    <property type="entry name" value="Peptidase_S1_PA"/>
</dbReference>
<dbReference type="InterPro" id="IPR043504">
    <property type="entry name" value="Peptidase_S1_PA_chymotrypsin"/>
</dbReference>
<dbReference type="InterPro" id="IPR008256">
    <property type="entry name" value="Peptidase_S1B"/>
</dbReference>
<dbReference type="InterPro" id="IPR008353">
    <property type="entry name" value="Peptidase_S1B_tx"/>
</dbReference>
<dbReference type="InterPro" id="IPR000126">
    <property type="entry name" value="V8_ser_AS"/>
</dbReference>
<dbReference type="PANTHER" id="PTHR15462">
    <property type="entry name" value="SERINE PROTEASE"/>
    <property type="match status" value="1"/>
</dbReference>
<dbReference type="PANTHER" id="PTHR15462:SF8">
    <property type="entry name" value="SERINE PROTEASE"/>
    <property type="match status" value="1"/>
</dbReference>
<dbReference type="Pfam" id="PF13365">
    <property type="entry name" value="Trypsin_2"/>
    <property type="match status" value="1"/>
</dbReference>
<dbReference type="PRINTS" id="PR01774">
    <property type="entry name" value="EXFOLTOXIN"/>
</dbReference>
<dbReference type="PRINTS" id="PR00839">
    <property type="entry name" value="V8PROTEASE"/>
</dbReference>
<dbReference type="SUPFAM" id="SSF50494">
    <property type="entry name" value="Trypsin-like serine proteases"/>
    <property type="match status" value="1"/>
</dbReference>
<dbReference type="PROSITE" id="PS00673">
    <property type="entry name" value="V8_SER"/>
    <property type="match status" value="1"/>
</dbReference>
<organism>
    <name type="scientific">Staphylococcus epidermidis</name>
    <dbReference type="NCBI Taxonomy" id="1282"/>
    <lineage>
        <taxon>Bacteria</taxon>
        <taxon>Bacillati</taxon>
        <taxon>Bacillota</taxon>
        <taxon>Bacilli</taxon>
        <taxon>Bacillales</taxon>
        <taxon>Staphylococcaceae</taxon>
        <taxon>Staphylococcus</taxon>
    </lineage>
</organism>